<protein>
    <recommendedName>
        <fullName evidence="1">Large ribosomal subunit protein bL12</fullName>
    </recommendedName>
    <alternativeName>
        <fullName evidence="2">50S ribosomal protein L7/L12</fullName>
    </alternativeName>
</protein>
<feature type="chain" id="PRO_1000195807" description="Large ribosomal subunit protein bL12">
    <location>
        <begin position="1"/>
        <end position="126"/>
    </location>
</feature>
<comment type="function">
    <text evidence="1">Forms part of the ribosomal stalk which helps the ribosome interact with GTP-bound translation factors. Is thus essential for accurate translation.</text>
</comment>
<comment type="subunit">
    <text evidence="1">Homodimer. Part of the ribosomal stalk of the 50S ribosomal subunit. Forms a multimeric L10(L12)X complex, where L10 forms an elongated spine to which 2 to 4 L12 dimers bind in a sequential fashion. Binds GTP-bound translation factors.</text>
</comment>
<comment type="similarity">
    <text evidence="1">Belongs to the bacterial ribosomal protein bL12 family.</text>
</comment>
<gene>
    <name evidence="1" type="primary">rplL</name>
    <name type="ordered locus">Mnod_1899</name>
</gene>
<name>RL7_METNO</name>
<evidence type="ECO:0000255" key="1">
    <source>
        <dbReference type="HAMAP-Rule" id="MF_00368"/>
    </source>
</evidence>
<evidence type="ECO:0000305" key="2"/>
<keyword id="KW-1185">Reference proteome</keyword>
<keyword id="KW-0687">Ribonucleoprotein</keyword>
<keyword id="KW-0689">Ribosomal protein</keyword>
<sequence length="126" mass="12847">MADLAKLVDDLSSLTVLEAAELAKMLEEKWGVSAAAAVAVAAGPAAGGAAAPAVEEKTEFTVVLAGAGDKKIEVIKEVRAITGLGLKEAKDLVEGAPKPVKESVAKDEAEKIKAQLEKAGAKVELK</sequence>
<organism>
    <name type="scientific">Methylobacterium nodulans (strain LMG 21967 / CNCM I-2342 / ORS 2060)</name>
    <dbReference type="NCBI Taxonomy" id="460265"/>
    <lineage>
        <taxon>Bacteria</taxon>
        <taxon>Pseudomonadati</taxon>
        <taxon>Pseudomonadota</taxon>
        <taxon>Alphaproteobacteria</taxon>
        <taxon>Hyphomicrobiales</taxon>
        <taxon>Methylobacteriaceae</taxon>
        <taxon>Methylobacterium</taxon>
    </lineage>
</organism>
<dbReference type="EMBL" id="CP001349">
    <property type="protein sequence ID" value="ACL56888.1"/>
    <property type="molecule type" value="Genomic_DNA"/>
</dbReference>
<dbReference type="RefSeq" id="WP_015928579.1">
    <property type="nucleotide sequence ID" value="NC_011894.1"/>
</dbReference>
<dbReference type="SMR" id="B8IS76"/>
<dbReference type="STRING" id="460265.Mnod_1899"/>
<dbReference type="KEGG" id="mno:Mnod_1899"/>
<dbReference type="eggNOG" id="COG0222">
    <property type="taxonomic scope" value="Bacteria"/>
</dbReference>
<dbReference type="HOGENOM" id="CLU_086499_3_0_5"/>
<dbReference type="OrthoDB" id="9811748at2"/>
<dbReference type="Proteomes" id="UP000008207">
    <property type="component" value="Chromosome"/>
</dbReference>
<dbReference type="GO" id="GO:0022625">
    <property type="term" value="C:cytosolic large ribosomal subunit"/>
    <property type="evidence" value="ECO:0007669"/>
    <property type="project" value="TreeGrafter"/>
</dbReference>
<dbReference type="GO" id="GO:0003729">
    <property type="term" value="F:mRNA binding"/>
    <property type="evidence" value="ECO:0007669"/>
    <property type="project" value="TreeGrafter"/>
</dbReference>
<dbReference type="GO" id="GO:0003735">
    <property type="term" value="F:structural constituent of ribosome"/>
    <property type="evidence" value="ECO:0007669"/>
    <property type="project" value="InterPro"/>
</dbReference>
<dbReference type="GO" id="GO:0006412">
    <property type="term" value="P:translation"/>
    <property type="evidence" value="ECO:0007669"/>
    <property type="project" value="UniProtKB-UniRule"/>
</dbReference>
<dbReference type="CDD" id="cd00387">
    <property type="entry name" value="Ribosomal_L7_L12"/>
    <property type="match status" value="1"/>
</dbReference>
<dbReference type="FunFam" id="1.20.5.710:FF:000007">
    <property type="entry name" value="50S ribosomal protein L7/L12"/>
    <property type="match status" value="1"/>
</dbReference>
<dbReference type="FunFam" id="3.30.1390.10:FF:000001">
    <property type="entry name" value="50S ribosomal protein L7/L12"/>
    <property type="match status" value="1"/>
</dbReference>
<dbReference type="Gene3D" id="3.30.1390.10">
    <property type="match status" value="1"/>
</dbReference>
<dbReference type="Gene3D" id="1.20.5.710">
    <property type="entry name" value="Single helix bin"/>
    <property type="match status" value="1"/>
</dbReference>
<dbReference type="HAMAP" id="MF_00368">
    <property type="entry name" value="Ribosomal_bL12"/>
    <property type="match status" value="1"/>
</dbReference>
<dbReference type="InterPro" id="IPR000206">
    <property type="entry name" value="Ribosomal_bL12"/>
</dbReference>
<dbReference type="InterPro" id="IPR013823">
    <property type="entry name" value="Ribosomal_bL12_C"/>
</dbReference>
<dbReference type="InterPro" id="IPR014719">
    <property type="entry name" value="Ribosomal_bL12_C/ClpS-like"/>
</dbReference>
<dbReference type="InterPro" id="IPR008932">
    <property type="entry name" value="Ribosomal_bL12_oligo"/>
</dbReference>
<dbReference type="InterPro" id="IPR036235">
    <property type="entry name" value="Ribosomal_bL12_oligo_N_sf"/>
</dbReference>
<dbReference type="NCBIfam" id="TIGR00855">
    <property type="entry name" value="L12"/>
    <property type="match status" value="1"/>
</dbReference>
<dbReference type="PANTHER" id="PTHR45987">
    <property type="entry name" value="39S RIBOSOMAL PROTEIN L12"/>
    <property type="match status" value="1"/>
</dbReference>
<dbReference type="PANTHER" id="PTHR45987:SF4">
    <property type="entry name" value="LARGE RIBOSOMAL SUBUNIT PROTEIN BL12M"/>
    <property type="match status" value="1"/>
</dbReference>
<dbReference type="Pfam" id="PF00542">
    <property type="entry name" value="Ribosomal_L12"/>
    <property type="match status" value="1"/>
</dbReference>
<dbReference type="Pfam" id="PF16320">
    <property type="entry name" value="Ribosomal_L12_N"/>
    <property type="match status" value="1"/>
</dbReference>
<dbReference type="SUPFAM" id="SSF54736">
    <property type="entry name" value="ClpS-like"/>
    <property type="match status" value="1"/>
</dbReference>
<dbReference type="SUPFAM" id="SSF48300">
    <property type="entry name" value="Ribosomal protein L7/12, oligomerisation (N-terminal) domain"/>
    <property type="match status" value="1"/>
</dbReference>
<reference key="1">
    <citation type="submission" date="2009-01" db="EMBL/GenBank/DDBJ databases">
        <title>Complete sequence of chromosome of Methylobacterium nodulans ORS 2060.</title>
        <authorList>
            <consortium name="US DOE Joint Genome Institute"/>
            <person name="Lucas S."/>
            <person name="Copeland A."/>
            <person name="Lapidus A."/>
            <person name="Glavina del Rio T."/>
            <person name="Dalin E."/>
            <person name="Tice H."/>
            <person name="Bruce D."/>
            <person name="Goodwin L."/>
            <person name="Pitluck S."/>
            <person name="Sims D."/>
            <person name="Brettin T."/>
            <person name="Detter J.C."/>
            <person name="Han C."/>
            <person name="Larimer F."/>
            <person name="Land M."/>
            <person name="Hauser L."/>
            <person name="Kyrpides N."/>
            <person name="Ivanova N."/>
            <person name="Marx C.J."/>
            <person name="Richardson P."/>
        </authorList>
    </citation>
    <scope>NUCLEOTIDE SEQUENCE [LARGE SCALE GENOMIC DNA]</scope>
    <source>
        <strain>LMG 21967 / CNCM I-2342 / ORS 2060</strain>
    </source>
</reference>
<proteinExistence type="inferred from homology"/>
<accession>B8IS76</accession>